<dbReference type="EMBL" id="X16148">
    <property type="protein sequence ID" value="CAA34273.1"/>
    <property type="molecule type" value="Genomic_DNA"/>
</dbReference>
<dbReference type="EMBL" id="U62674">
    <property type="protein sequence ID" value="AAB04770.1"/>
    <property type="molecule type" value="Genomic_DNA"/>
</dbReference>
<dbReference type="EMBL" id="AY158924">
    <property type="protein sequence ID" value="AAO06234.1"/>
    <property type="molecule type" value="Genomic_DNA"/>
</dbReference>
<dbReference type="EMBL" id="AY158925">
    <property type="protein sequence ID" value="AAO06235.1"/>
    <property type="molecule type" value="Genomic_DNA"/>
</dbReference>
<dbReference type="EMBL" id="AY158953">
    <property type="protein sequence ID" value="AAO06263.1"/>
    <property type="molecule type" value="Genomic_DNA"/>
</dbReference>
<dbReference type="EMBL" id="AK002725">
    <property type="protein sequence ID" value="BAB22310.1"/>
    <property type="molecule type" value="mRNA"/>
</dbReference>
<dbReference type="EMBL" id="AK006728">
    <property type="protein sequence ID" value="BAB24717.1"/>
    <property type="molecule type" value="mRNA"/>
</dbReference>
<dbReference type="EMBL" id="BC010564">
    <property type="protein sequence ID" value="AAH10564.3"/>
    <property type="molecule type" value="mRNA"/>
</dbReference>
<dbReference type="EMBL" id="BC062255">
    <property type="protein sequence ID" value="AAH62255.1"/>
    <property type="molecule type" value="mRNA"/>
</dbReference>
<dbReference type="EMBL" id="BC089519">
    <property type="protein sequence ID" value="AAH89519.1"/>
    <property type="molecule type" value="mRNA"/>
</dbReference>
<dbReference type="CCDS" id="CCDS57241.1"/>
<dbReference type="CCDS" id="CCDS57242.1"/>
<dbReference type="PIR" id="S06742">
    <property type="entry name" value="S06742"/>
</dbReference>
<dbReference type="RefSeq" id="NP_038577.1">
    <property type="nucleotide sequence ID" value="NM_013549.2"/>
</dbReference>
<dbReference type="RefSeq" id="NP_835584.1">
    <property type="nucleotide sequence ID" value="NM_178212.3"/>
</dbReference>
<dbReference type="SMR" id="Q6GSS7"/>
<dbReference type="BioGRID" id="200310">
    <property type="interactions" value="5"/>
</dbReference>
<dbReference type="BioGRID" id="235111">
    <property type="interactions" value="1"/>
</dbReference>
<dbReference type="FunCoup" id="Q6GSS7">
    <property type="interactions" value="1326"/>
</dbReference>
<dbReference type="IntAct" id="Q6GSS7">
    <property type="interactions" value="1"/>
</dbReference>
<dbReference type="STRING" id="10090.ENSMUSP00000077814"/>
<dbReference type="GlyGen" id="Q6GSS7">
    <property type="glycosylation" value="1 site, 1 O-linked glycan (1 site)"/>
</dbReference>
<dbReference type="iPTMnet" id="Q6GSS7"/>
<dbReference type="PhosphoSitePlus" id="Q6GSS7"/>
<dbReference type="SwissPalm" id="Q6GSS7"/>
<dbReference type="jPOST" id="Q6GSS7"/>
<dbReference type="PaxDb" id="10090-ENSMUSP00000077814"/>
<dbReference type="Pumba" id="Q6GSS7"/>
<dbReference type="Antibodypedia" id="73310">
    <property type="antibodies" value="95 antibodies from 16 providers"/>
</dbReference>
<dbReference type="DNASU" id="15267"/>
<dbReference type="Ensembl" id="ENSMUST00000074976.8">
    <property type="protein sequence ID" value="ENSMUSP00000100581.4"/>
    <property type="gene ID" value="ENSMUSG00000063954.8"/>
</dbReference>
<dbReference type="Ensembl" id="ENSMUST00000078756.7">
    <property type="protein sequence ID" value="ENSMUSP00000077814.6"/>
    <property type="gene ID" value="ENSMUSG00000064220.7"/>
</dbReference>
<dbReference type="GeneID" id="15267"/>
<dbReference type="GeneID" id="319192"/>
<dbReference type="KEGG" id="mmu:15267"/>
<dbReference type="KEGG" id="mmu:319192"/>
<dbReference type="UCSC" id="uc008qml.3">
    <property type="organism name" value="mouse"/>
</dbReference>
<dbReference type="AGR" id="MGI:2448283"/>
<dbReference type="AGR" id="MGI:96097"/>
<dbReference type="CTD" id="723790"/>
<dbReference type="CTD" id="8337"/>
<dbReference type="MGI" id="MGI:96097">
    <property type="gene designation" value="Hist2h2aa1"/>
</dbReference>
<dbReference type="MGI" id="MGI:2448283">
    <property type="gene designation" value="Hist2h2aa2"/>
</dbReference>
<dbReference type="VEuPathDB" id="HostDB:ENSMUSG00000063954"/>
<dbReference type="VEuPathDB" id="HostDB:ENSMUSG00000064220"/>
<dbReference type="eggNOG" id="KOG1756">
    <property type="taxonomic scope" value="Eukaryota"/>
</dbReference>
<dbReference type="GeneTree" id="ENSGT00940000156302"/>
<dbReference type="HOGENOM" id="CLU_062828_3_1_1"/>
<dbReference type="InParanoid" id="Q6GSS7"/>
<dbReference type="OMA" id="CALESQH"/>
<dbReference type="OrthoDB" id="9608857at2759"/>
<dbReference type="PhylomeDB" id="Q6GSS7"/>
<dbReference type="TreeFam" id="TF300137"/>
<dbReference type="Reactome" id="R-MMU-110330">
    <property type="pathway name" value="Recognition and association of DNA glycosylase with site containing an affected purine"/>
</dbReference>
<dbReference type="Reactome" id="R-MMU-110331">
    <property type="pathway name" value="Cleavage of the damaged purine"/>
</dbReference>
<dbReference type="Reactome" id="R-MMU-212300">
    <property type="pathway name" value="PRC2 methylates histones and DNA"/>
</dbReference>
<dbReference type="Reactome" id="R-MMU-2299718">
    <property type="pathway name" value="Condensation of Prophase Chromosomes"/>
</dbReference>
<dbReference type="Reactome" id="R-MMU-2559586">
    <property type="pathway name" value="DNA Damage/Telomere Stress Induced Senescence"/>
</dbReference>
<dbReference type="Reactome" id="R-MMU-3214815">
    <property type="pathway name" value="HDACs deacetylate histones"/>
</dbReference>
<dbReference type="Reactome" id="R-MMU-3214858">
    <property type="pathway name" value="RMTs methylate histone arginines"/>
</dbReference>
<dbReference type="Reactome" id="R-MMU-5689603">
    <property type="pathway name" value="UCH proteinases"/>
</dbReference>
<dbReference type="Reactome" id="R-MMU-5689880">
    <property type="pathway name" value="Ub-specific processing proteases"/>
</dbReference>
<dbReference type="Reactome" id="R-MMU-5689901">
    <property type="pathway name" value="Metalloprotease DUBs"/>
</dbReference>
<dbReference type="Reactome" id="R-MMU-606279">
    <property type="pathway name" value="Deposition of new CENPA-containing nucleosomes at the centromere"/>
</dbReference>
<dbReference type="Reactome" id="R-MMU-8936459">
    <property type="pathway name" value="RUNX1 regulates genes involved in megakaryocyte differentiation and platelet function"/>
</dbReference>
<dbReference type="Reactome" id="R-MMU-9670095">
    <property type="pathway name" value="Inhibition of DNA recombination at telomere"/>
</dbReference>
<dbReference type="Reactome" id="R-MMU-9841922">
    <property type="pathway name" value="MLL4 and MLL3 complexes regulate expression of PPARG target genes in adipogenesis and hepatic steatosis"/>
</dbReference>
<dbReference type="Reactome" id="R-MMU-9843940">
    <property type="pathway name" value="Regulation of endogenous retroelements by KRAB-ZFP proteins"/>
</dbReference>
<dbReference type="BioGRID-ORCS" id="15267">
    <property type="hits" value="7 hits in 42 CRISPR screens"/>
</dbReference>
<dbReference type="BioGRID-ORCS" id="319192">
    <property type="hits" value="9 hits in 38 CRISPR screens"/>
</dbReference>
<dbReference type="CD-CODE" id="5E82D60E">
    <property type="entry name" value="Nucleolus"/>
</dbReference>
<dbReference type="ChiTaRS" id="Hist2h2aa1">
    <property type="organism name" value="mouse"/>
</dbReference>
<dbReference type="ChiTaRS" id="Hist2h2aa2">
    <property type="organism name" value="mouse"/>
</dbReference>
<dbReference type="PRO" id="PR:Q6GSS7"/>
<dbReference type="Proteomes" id="UP000000589">
    <property type="component" value="Chromosome 3"/>
</dbReference>
<dbReference type="RNAct" id="Q6GSS7">
    <property type="molecule type" value="protein"/>
</dbReference>
<dbReference type="Bgee" id="ENSMUSG00000063954">
    <property type="expression patterns" value="Expressed in white adipose tissue and 69 other cell types or tissues"/>
</dbReference>
<dbReference type="ExpressionAtlas" id="Q6GSS7">
    <property type="expression patterns" value="baseline"/>
</dbReference>
<dbReference type="GO" id="GO:0000786">
    <property type="term" value="C:nucleosome"/>
    <property type="evidence" value="ECO:0007669"/>
    <property type="project" value="UniProtKB-KW"/>
</dbReference>
<dbReference type="GO" id="GO:0005634">
    <property type="term" value="C:nucleus"/>
    <property type="evidence" value="ECO:0007669"/>
    <property type="project" value="UniProtKB-SubCell"/>
</dbReference>
<dbReference type="GO" id="GO:0003677">
    <property type="term" value="F:DNA binding"/>
    <property type="evidence" value="ECO:0000303"/>
    <property type="project" value="UniProtKB"/>
</dbReference>
<dbReference type="GO" id="GO:0046982">
    <property type="term" value="F:protein heterodimerization activity"/>
    <property type="evidence" value="ECO:0007669"/>
    <property type="project" value="InterPro"/>
</dbReference>
<dbReference type="GO" id="GO:0030527">
    <property type="term" value="F:structural constituent of chromatin"/>
    <property type="evidence" value="ECO:0007669"/>
    <property type="project" value="InterPro"/>
</dbReference>
<dbReference type="GO" id="GO:0006334">
    <property type="term" value="P:nucleosome assembly"/>
    <property type="evidence" value="ECO:0000303"/>
    <property type="project" value="UniProtKB"/>
</dbReference>
<dbReference type="CDD" id="cd00074">
    <property type="entry name" value="HFD_H2A"/>
    <property type="match status" value="1"/>
</dbReference>
<dbReference type="FunFam" id="1.10.20.10:FF:000103">
    <property type="entry name" value="Histone H2A type 1"/>
    <property type="match status" value="1"/>
</dbReference>
<dbReference type="Gene3D" id="1.10.20.10">
    <property type="entry name" value="Histone, subunit A"/>
    <property type="match status" value="1"/>
</dbReference>
<dbReference type="InterPro" id="IPR009072">
    <property type="entry name" value="Histone-fold"/>
</dbReference>
<dbReference type="InterPro" id="IPR002119">
    <property type="entry name" value="Histone_H2A"/>
</dbReference>
<dbReference type="InterPro" id="IPR007125">
    <property type="entry name" value="Histone_H2A/H2B/H3"/>
</dbReference>
<dbReference type="InterPro" id="IPR032454">
    <property type="entry name" value="Histone_H2A_C"/>
</dbReference>
<dbReference type="InterPro" id="IPR032458">
    <property type="entry name" value="Histone_H2A_CS"/>
</dbReference>
<dbReference type="PANTHER" id="PTHR23430">
    <property type="entry name" value="HISTONE H2A"/>
    <property type="match status" value="1"/>
</dbReference>
<dbReference type="Pfam" id="PF00125">
    <property type="entry name" value="Histone"/>
    <property type="match status" value="1"/>
</dbReference>
<dbReference type="Pfam" id="PF16211">
    <property type="entry name" value="Histone_H2A_C"/>
    <property type="match status" value="1"/>
</dbReference>
<dbReference type="PRINTS" id="PR00620">
    <property type="entry name" value="HISTONEH2A"/>
</dbReference>
<dbReference type="SMART" id="SM00414">
    <property type="entry name" value="H2A"/>
    <property type="match status" value="1"/>
</dbReference>
<dbReference type="SUPFAM" id="SSF47113">
    <property type="entry name" value="Histone-fold"/>
    <property type="match status" value="1"/>
</dbReference>
<dbReference type="PROSITE" id="PS00046">
    <property type="entry name" value="HISTONE_H2A"/>
    <property type="match status" value="1"/>
</dbReference>
<comment type="function">
    <text>Core component of nucleosome. Nucleosomes wrap and compact DNA into chromatin, limiting DNA accessibility to the cellular machineries which require DNA as a template. Histones thereby play a central role in transcription regulation, DNA repair, DNA replication and chromosomal stability. DNA accessibility is regulated via a complex set of post-translational modifications of histones, also called histone code, and nucleosome remodeling.</text>
</comment>
<comment type="subunit">
    <text>The nucleosome is a histone octamer containing two molecules each of H2A, H2B, H3 and H4 assembled in one H3-H4 heterotetramer and two H2A-H2B heterodimers. The octamer wraps approximately 147 bp of DNA.</text>
</comment>
<comment type="subcellular location">
    <subcellularLocation>
        <location>Nucleus</location>
    </subcellularLocation>
    <subcellularLocation>
        <location>Chromosome</location>
    </subcellularLocation>
</comment>
<comment type="PTM">
    <text evidence="2">Deiminated on Arg-4 in granulocytes upon calcium entry.</text>
</comment>
<comment type="PTM">
    <text evidence="2 5 6 9">Monoubiquitination of Lys-120 (H2AK119Ub) by RING1, TRIM37 and RNF2/RING2 complex gives a specific tag for epigenetic transcriptional repression and participates in X chromosome inactivation of female mammals. It is involved in the initiation of both imprinted and random X inactivation. Ubiquitinated H2A is enriched in inactive X chromosome chromatin. Ubiquitination of H2A functions downstream of methylation of 'Lys-27' of histone H3 (H3K27me). H2AK119Ub by RNF2/RING2 can also be induced by ultraviolet and may be involved in DNA repair. Following DNA double-strand breaks (DSBs), it is ubiquitinated through 'Lys-63' linkage of ubiquitin moieties by the E2 ligase UBE2N and the E3 ligases RNF8 and RNF168, leading to the recruitment of repair proteins to sites of DNA damage. Ubiquitination at Lys-14 and Lys-16 (H2AK13Ub and H2AK15Ub, respectively) in response to DNA damage is initiated by RNF168 that mediates monoubiquitination at these 2 sites, and 'Lys-63'-linked ubiquitin are then conjugated to monoubiquitin; RNF8 is able to extend 'Lys-63'-linked ubiquitin chains in vitro. H2AK119Ub and ionizing radiation-induced 'Lys-63'-linked ubiquitination (H2AK13Ub and H2AK15Ub) are distinct events.</text>
</comment>
<comment type="PTM">
    <text evidence="2">Phosphorylation on Ser-2 (H2AS1ph) is enhanced during mitosis. Phosphorylation on Ser-2 by RPS6KA5/MSK1 directly represses transcription. Acetylation of H3 inhibits Ser-2 phosphorylation by RPS6KA5/MSK1. Phosphorylation at Thr-121 (H2AT120ph) by DCAF1 is present in the regulatory region of many tumor suppresor genes and down-regulates their transcription.</text>
</comment>
<comment type="PTM">
    <text evidence="7">Symmetric dimethylation on Arg-4 by the PRDM1/PRMT5 complex may play a crucial role in the germ-cell lineage.</text>
</comment>
<comment type="PTM">
    <text evidence="9">Glutamine methylation at Gln-105 (H2AQ104me) by FBL is specifically dedicated to polymerase I. It is present at 35S ribosomal DNA locus and impairs binding of the FACT complex.</text>
</comment>
<comment type="PTM">
    <text evidence="8">Crotonylation (Kcr) is specifically present in male germ cells and marks testis-specific genes in post-meiotic cells, including X-linked genes that escape sex chromosome inactivation in haploid cells. Crotonylation marks active promoters and enhancers and confers resistance to transcriptional repressors. It is also associated with post-meiotically activated genes on autosomes.</text>
</comment>
<comment type="PTM">
    <text evidence="11">Hydroxybutyrylation of histones is induced by starvation.</text>
</comment>
<comment type="PTM">
    <text evidence="1">Lactylated in macrophages by EP300/P300 by using lactoyl-CoA directly derived from endogenous or exogenous lactate, leading to stimulates gene transcription.</text>
</comment>
<comment type="similarity">
    <text evidence="13">Belongs to the histone H2A family.</text>
</comment>
<proteinExistence type="evidence at protein level"/>
<organism>
    <name type="scientific">Mus musculus</name>
    <name type="common">Mouse</name>
    <dbReference type="NCBI Taxonomy" id="10090"/>
    <lineage>
        <taxon>Eukaryota</taxon>
        <taxon>Metazoa</taxon>
        <taxon>Chordata</taxon>
        <taxon>Craniata</taxon>
        <taxon>Vertebrata</taxon>
        <taxon>Euteleostomi</taxon>
        <taxon>Mammalia</taxon>
        <taxon>Eutheria</taxon>
        <taxon>Euarchontoglires</taxon>
        <taxon>Glires</taxon>
        <taxon>Rodentia</taxon>
        <taxon>Myomorpha</taxon>
        <taxon>Muroidea</taxon>
        <taxon>Muridae</taxon>
        <taxon>Murinae</taxon>
        <taxon>Mus</taxon>
        <taxon>Mus</taxon>
    </lineage>
</organism>
<keyword id="KW-0007">Acetylation</keyword>
<keyword id="KW-0158">Chromosome</keyword>
<keyword id="KW-0164">Citrullination</keyword>
<keyword id="KW-0238">DNA-binding</keyword>
<keyword id="KW-0379">Hydroxylation</keyword>
<keyword id="KW-1017">Isopeptide bond</keyword>
<keyword id="KW-0488">Methylation</keyword>
<keyword id="KW-0544">Nucleosome core</keyword>
<keyword id="KW-0539">Nucleus</keyword>
<keyword id="KW-0597">Phosphoprotein</keyword>
<keyword id="KW-1185">Reference proteome</keyword>
<keyword id="KW-0832">Ubl conjugation</keyword>
<protein>
    <recommendedName>
        <fullName>Histone H2A type 2-A</fullName>
    </recommendedName>
    <alternativeName>
        <fullName>H2a-614</fullName>
    </alternativeName>
    <alternativeName>
        <fullName>H2a-615</fullName>
    </alternativeName>
    <alternativeName>
        <fullName>Histone H2A.2</fullName>
    </alternativeName>
</protein>
<gene>
    <name type="primary">Hist2h2aa1</name>
</gene>
<gene>
    <name type="primary">Hist2h2aa2</name>
</gene>
<reference key="1">
    <citation type="journal article" date="1989" name="Nucleic Acids Res.">
        <title>The mouse histone H2a.2 gene from chromosome 3.</title>
        <authorList>
            <person name="Hurt M.M."/>
            <person name="Chodchoy N."/>
            <person name="Marzluff W.F."/>
        </authorList>
    </citation>
    <scope>NUCLEOTIDE SEQUENCE [GENOMIC DNA]</scope>
    <source>
        <strain>BALB/cJ</strain>
        <tissue>Liver</tissue>
    </source>
</reference>
<reference key="2">
    <citation type="journal article" date="1996" name="Genome Res.">
        <title>Characterization of the 55-kb mouse histone gene cluster on chromosome 3.</title>
        <authorList>
            <person name="Wang Z.-F."/>
            <person name="Tisovec R."/>
            <person name="Debry R.W."/>
            <person name="Frey M.R."/>
            <person name="Matera A.G."/>
            <person name="Marzluff W.F."/>
        </authorList>
    </citation>
    <scope>NUCLEOTIDE SEQUENCE [GENOMIC DNA]</scope>
    <source>
        <strain>129</strain>
    </source>
</reference>
<reference key="3">
    <citation type="journal article" date="2002" name="Genomics">
        <title>The human and mouse replication-dependent histone genes.</title>
        <authorList>
            <person name="Marzluff W.F."/>
            <person name="Gongidi P."/>
            <person name="Woods K.R."/>
            <person name="Jin J."/>
            <person name="Maltais L.J."/>
        </authorList>
    </citation>
    <scope>NUCLEOTIDE SEQUENCE [GENOMIC DNA]</scope>
</reference>
<reference key="4">
    <citation type="journal article" date="2005" name="Science">
        <title>The transcriptional landscape of the mammalian genome.</title>
        <authorList>
            <person name="Carninci P."/>
            <person name="Kasukawa T."/>
            <person name="Katayama S."/>
            <person name="Gough J."/>
            <person name="Frith M.C."/>
            <person name="Maeda N."/>
            <person name="Oyama R."/>
            <person name="Ravasi T."/>
            <person name="Lenhard B."/>
            <person name="Wells C."/>
            <person name="Kodzius R."/>
            <person name="Shimokawa K."/>
            <person name="Bajic V.B."/>
            <person name="Brenner S.E."/>
            <person name="Batalov S."/>
            <person name="Forrest A.R."/>
            <person name="Zavolan M."/>
            <person name="Davis M.J."/>
            <person name="Wilming L.G."/>
            <person name="Aidinis V."/>
            <person name="Allen J.E."/>
            <person name="Ambesi-Impiombato A."/>
            <person name="Apweiler R."/>
            <person name="Aturaliya R.N."/>
            <person name="Bailey T.L."/>
            <person name="Bansal M."/>
            <person name="Baxter L."/>
            <person name="Beisel K.W."/>
            <person name="Bersano T."/>
            <person name="Bono H."/>
            <person name="Chalk A.M."/>
            <person name="Chiu K.P."/>
            <person name="Choudhary V."/>
            <person name="Christoffels A."/>
            <person name="Clutterbuck D.R."/>
            <person name="Crowe M.L."/>
            <person name="Dalla E."/>
            <person name="Dalrymple B.P."/>
            <person name="de Bono B."/>
            <person name="Della Gatta G."/>
            <person name="di Bernardo D."/>
            <person name="Down T."/>
            <person name="Engstrom P."/>
            <person name="Fagiolini M."/>
            <person name="Faulkner G."/>
            <person name="Fletcher C.F."/>
            <person name="Fukushima T."/>
            <person name="Furuno M."/>
            <person name="Futaki S."/>
            <person name="Gariboldi M."/>
            <person name="Georgii-Hemming P."/>
            <person name="Gingeras T.R."/>
            <person name="Gojobori T."/>
            <person name="Green R.E."/>
            <person name="Gustincich S."/>
            <person name="Harbers M."/>
            <person name="Hayashi Y."/>
            <person name="Hensch T.K."/>
            <person name="Hirokawa N."/>
            <person name="Hill D."/>
            <person name="Huminiecki L."/>
            <person name="Iacono M."/>
            <person name="Ikeo K."/>
            <person name="Iwama A."/>
            <person name="Ishikawa T."/>
            <person name="Jakt M."/>
            <person name="Kanapin A."/>
            <person name="Katoh M."/>
            <person name="Kawasawa Y."/>
            <person name="Kelso J."/>
            <person name="Kitamura H."/>
            <person name="Kitano H."/>
            <person name="Kollias G."/>
            <person name="Krishnan S.P."/>
            <person name="Kruger A."/>
            <person name="Kummerfeld S.K."/>
            <person name="Kurochkin I.V."/>
            <person name="Lareau L.F."/>
            <person name="Lazarevic D."/>
            <person name="Lipovich L."/>
            <person name="Liu J."/>
            <person name="Liuni S."/>
            <person name="McWilliam S."/>
            <person name="Madan Babu M."/>
            <person name="Madera M."/>
            <person name="Marchionni L."/>
            <person name="Matsuda H."/>
            <person name="Matsuzawa S."/>
            <person name="Miki H."/>
            <person name="Mignone F."/>
            <person name="Miyake S."/>
            <person name="Morris K."/>
            <person name="Mottagui-Tabar S."/>
            <person name="Mulder N."/>
            <person name="Nakano N."/>
            <person name="Nakauchi H."/>
            <person name="Ng P."/>
            <person name="Nilsson R."/>
            <person name="Nishiguchi S."/>
            <person name="Nishikawa S."/>
            <person name="Nori F."/>
            <person name="Ohara O."/>
            <person name="Okazaki Y."/>
            <person name="Orlando V."/>
            <person name="Pang K.C."/>
            <person name="Pavan W.J."/>
            <person name="Pavesi G."/>
            <person name="Pesole G."/>
            <person name="Petrovsky N."/>
            <person name="Piazza S."/>
            <person name="Reed J."/>
            <person name="Reid J.F."/>
            <person name="Ring B.Z."/>
            <person name="Ringwald M."/>
            <person name="Rost B."/>
            <person name="Ruan Y."/>
            <person name="Salzberg S.L."/>
            <person name="Sandelin A."/>
            <person name="Schneider C."/>
            <person name="Schoenbach C."/>
            <person name="Sekiguchi K."/>
            <person name="Semple C.A."/>
            <person name="Seno S."/>
            <person name="Sessa L."/>
            <person name="Sheng Y."/>
            <person name="Shibata Y."/>
            <person name="Shimada H."/>
            <person name="Shimada K."/>
            <person name="Silva D."/>
            <person name="Sinclair B."/>
            <person name="Sperling S."/>
            <person name="Stupka E."/>
            <person name="Sugiura K."/>
            <person name="Sultana R."/>
            <person name="Takenaka Y."/>
            <person name="Taki K."/>
            <person name="Tammoja K."/>
            <person name="Tan S.L."/>
            <person name="Tang S."/>
            <person name="Taylor M.S."/>
            <person name="Tegner J."/>
            <person name="Teichmann S.A."/>
            <person name="Ueda H.R."/>
            <person name="van Nimwegen E."/>
            <person name="Verardo R."/>
            <person name="Wei C.L."/>
            <person name="Yagi K."/>
            <person name="Yamanishi H."/>
            <person name="Zabarovsky E."/>
            <person name="Zhu S."/>
            <person name="Zimmer A."/>
            <person name="Hide W."/>
            <person name="Bult C."/>
            <person name="Grimmond S.M."/>
            <person name="Teasdale R.D."/>
            <person name="Liu E.T."/>
            <person name="Brusic V."/>
            <person name="Quackenbush J."/>
            <person name="Wahlestedt C."/>
            <person name="Mattick J.S."/>
            <person name="Hume D.A."/>
            <person name="Kai C."/>
            <person name="Sasaki D."/>
            <person name="Tomaru Y."/>
            <person name="Fukuda S."/>
            <person name="Kanamori-Katayama M."/>
            <person name="Suzuki M."/>
            <person name="Aoki J."/>
            <person name="Arakawa T."/>
            <person name="Iida J."/>
            <person name="Imamura K."/>
            <person name="Itoh M."/>
            <person name="Kato T."/>
            <person name="Kawaji H."/>
            <person name="Kawagashira N."/>
            <person name="Kawashima T."/>
            <person name="Kojima M."/>
            <person name="Kondo S."/>
            <person name="Konno H."/>
            <person name="Nakano K."/>
            <person name="Ninomiya N."/>
            <person name="Nishio T."/>
            <person name="Okada M."/>
            <person name="Plessy C."/>
            <person name="Shibata K."/>
            <person name="Shiraki T."/>
            <person name="Suzuki S."/>
            <person name="Tagami M."/>
            <person name="Waki K."/>
            <person name="Watahiki A."/>
            <person name="Okamura-Oho Y."/>
            <person name="Suzuki H."/>
            <person name="Kawai J."/>
            <person name="Hayashizaki Y."/>
        </authorList>
    </citation>
    <scope>NUCLEOTIDE SEQUENCE [LARGE SCALE MRNA]</scope>
    <source>
        <strain>C57BL/6J</strain>
        <tissue>Kidney</tissue>
        <tissue>Testis</tissue>
    </source>
</reference>
<reference key="5">
    <citation type="journal article" date="2004" name="Genome Res.">
        <title>The status, quality, and expansion of the NIH full-length cDNA project: the Mammalian Gene Collection (MGC).</title>
        <authorList>
            <consortium name="The MGC Project Team"/>
        </authorList>
    </citation>
    <scope>NUCLEOTIDE SEQUENCE [LARGE SCALE MRNA]</scope>
    <source>
        <strain>C57BL/6J</strain>
        <strain>FVB/N</strain>
        <tissue>Mammary gland</tissue>
        <tissue>Testis</tissue>
    </source>
</reference>
<reference key="6">
    <citation type="journal article" date="1981" name="J. Biol. Chem.">
        <title>Quantitative determination of histone modification. H2A acetylation and phosphorylation.</title>
        <authorList>
            <person name="Pantazis P."/>
            <person name="Bonner W.M."/>
        </authorList>
    </citation>
    <scope>PHOSPHORYLATION AT SER-2</scope>
    <scope>ACETYLATION AT SER-2 AND LYS-6</scope>
</reference>
<reference key="7">
    <citation type="journal article" date="2004" name="Dev. Cell">
        <title>Polycomb group proteins Ring1A/B link ubiquitylation of histone H2A to heritable gene silencing and X inactivation.</title>
        <authorList>
            <person name="de Napoles M."/>
            <person name="Mermoud J.E."/>
            <person name="Wakao R."/>
            <person name="Tang Y.A."/>
            <person name="Endoh M."/>
            <person name="Appanah R."/>
            <person name="Nesterova T.B."/>
            <person name="Silva J."/>
            <person name="Otte A.P."/>
            <person name="Vidal M."/>
            <person name="Koseki H."/>
            <person name="Brockdorff N."/>
        </authorList>
    </citation>
    <scope>UBIQUITINATION AT LYS-120</scope>
</reference>
<reference key="8">
    <citation type="journal article" date="2004" name="J. Biol. Chem.">
        <title>Ring1b-mediated H2A ubiquitination associates with inactive X chromosomes and is involved in initiation of X inactivation.</title>
        <authorList>
            <person name="Fang J."/>
            <person name="Chen T."/>
            <person name="Chadwick B."/>
            <person name="Li E."/>
            <person name="Zhang Y."/>
        </authorList>
    </citation>
    <scope>UBIQUITINATION AT LYS-120</scope>
</reference>
<reference key="9">
    <citation type="journal article" date="2006" name="Nat. Cell Biol.">
        <title>Blimp1 associates with Prmt5 and directs histone arginine methylation in mouse germ cells.</title>
        <authorList>
            <person name="Ancelin K."/>
            <person name="Lange U.C."/>
            <person name="Hajkova P."/>
            <person name="Schneider R."/>
            <person name="Bannister A.J."/>
            <person name="Kouzarides T."/>
            <person name="Surani M.A."/>
        </authorList>
    </citation>
    <scope>METHYLATION AT ARG-4</scope>
</reference>
<reference key="10">
    <citation type="journal article" date="2011" name="Cell">
        <title>Identification of 67 histone marks and histone lysine crotonylation as a new type of histone modification.</title>
        <authorList>
            <person name="Tan M."/>
            <person name="Luo H."/>
            <person name="Lee S."/>
            <person name="Jin F."/>
            <person name="Yang J.S."/>
            <person name="Montellier E."/>
            <person name="Buchou T."/>
            <person name="Cheng Z."/>
            <person name="Rousseaux S."/>
            <person name="Rajagopal N."/>
            <person name="Lu Z."/>
            <person name="Ye Z."/>
            <person name="Zhu Q."/>
            <person name="Wysocka J."/>
            <person name="Ye Y."/>
            <person name="Khochbin S."/>
            <person name="Ren B."/>
            <person name="Zhao Y."/>
        </authorList>
    </citation>
    <scope>CROTONYLATION AT LYS-37 AND LYS-119</scope>
</reference>
<reference key="11">
    <citation type="journal article" date="2014" name="Nat. Chem. Biol.">
        <title>Lysine 2-hydroxyisobutyrylation is a widely distributed active histone mark.</title>
        <authorList>
            <person name="Dai L."/>
            <person name="Peng C."/>
            <person name="Montellier E."/>
            <person name="Lu Z."/>
            <person name="Chen Y."/>
            <person name="Ishii H."/>
            <person name="Debernardi A."/>
            <person name="Buchou T."/>
            <person name="Rousseaux S."/>
            <person name="Jin F."/>
            <person name="Sabari B.R."/>
            <person name="Deng Z."/>
            <person name="Allis C.D."/>
            <person name="Ren B."/>
            <person name="Khochbin S."/>
            <person name="Zhao Y."/>
        </authorList>
    </citation>
    <scope>HYDROXYBUTYRYLATION AT LYS-6; LYS-10; LYS-37; LYS-75; LYS-76; LYS-96 AND LYS-119</scope>
</reference>
<reference key="12">
    <citation type="journal article" date="2014" name="Nature">
        <title>Glutamine methylation in histone H2A is an RNA-polymerase-I-dedicated modification.</title>
        <authorList>
            <person name="Tessarz P."/>
            <person name="Santos-Rosa H."/>
            <person name="Robson S.C."/>
            <person name="Sylvestersen K.B."/>
            <person name="Nelson C.J."/>
            <person name="Nielsen M.L."/>
            <person name="Kouzarides T."/>
        </authorList>
    </citation>
    <scope>METHYLATION AT GLN-105</scope>
</reference>
<reference key="13">
    <citation type="journal article" date="2016" name="Mol. Cell">
        <title>Metabolic regulation of gene expression by histone lysine beta-hydroxybutyrylation.</title>
        <authorList>
            <person name="Xie Z."/>
            <person name="Zhang D."/>
            <person name="Chung D."/>
            <person name="Tang Z."/>
            <person name="Huang H."/>
            <person name="Dai L."/>
            <person name="Qi S."/>
            <person name="Li J."/>
            <person name="Colak G."/>
            <person name="Chen Y."/>
            <person name="Xia C."/>
            <person name="Peng C."/>
            <person name="Ruan H."/>
            <person name="Kirkey M."/>
            <person name="Wang D."/>
            <person name="Jensen L.M."/>
            <person name="Kwon O.K."/>
            <person name="Lee S."/>
            <person name="Pletcher S.D."/>
            <person name="Tan M."/>
            <person name="Lombard D.B."/>
            <person name="White K.P."/>
            <person name="Zhao H."/>
            <person name="Li J."/>
            <person name="Roeder R.G."/>
            <person name="Yang X."/>
            <person name="Zhao Y."/>
        </authorList>
    </citation>
    <scope>HYDROXYBUTYRYLATION AT LYS-6; LYS-37; LYS-120 AND LYS-126</scope>
</reference>
<accession>Q6GSS7</accession>
<accession>P20670</accession>
<accession>Q811M3</accession>
<name>H2A2A_MOUSE</name>
<sequence length="130" mass="14095">MSGRGKQGGKARAKAKSRSSRAGLQFPVGRVHRLLRKGNYAERVGAGAPVYMAAVLEYLTAEILELAGNAARDNKKTRIIPRHLQLAIRNDEELNKLLGKVTIAQGGVLPNIQAVLLPKKTESHHKAKGK</sequence>
<evidence type="ECO:0000250" key="1">
    <source>
        <dbReference type="UniProtKB" id="P0C0S5"/>
    </source>
</evidence>
<evidence type="ECO:0000250" key="2">
    <source>
        <dbReference type="UniProtKB" id="P0C0S8"/>
    </source>
</evidence>
<evidence type="ECO:0000250" key="3">
    <source>
        <dbReference type="UniProtKB" id="Q6FI13"/>
    </source>
</evidence>
<evidence type="ECO:0000256" key="4">
    <source>
        <dbReference type="SAM" id="MobiDB-lite"/>
    </source>
</evidence>
<evidence type="ECO:0000269" key="5">
    <source>
    </source>
</evidence>
<evidence type="ECO:0000269" key="6">
    <source>
    </source>
</evidence>
<evidence type="ECO:0000269" key="7">
    <source>
    </source>
</evidence>
<evidence type="ECO:0000269" key="8">
    <source>
    </source>
</evidence>
<evidence type="ECO:0000269" key="9">
    <source>
    </source>
</evidence>
<evidence type="ECO:0000269" key="10">
    <source>
    </source>
</evidence>
<evidence type="ECO:0000269" key="11">
    <source>
    </source>
</evidence>
<evidence type="ECO:0000269" key="12">
    <source>
    </source>
</evidence>
<evidence type="ECO:0000305" key="13"/>
<evidence type="ECO:0000305" key="14">
    <source>
    </source>
</evidence>
<feature type="initiator methionine" description="Removed" evidence="12">
    <location>
        <position position="1"/>
    </location>
</feature>
<feature type="chain" id="PRO_0000055233" description="Histone H2A type 2-A">
    <location>
        <begin position="2"/>
        <end position="130"/>
    </location>
</feature>
<feature type="region of interest" description="Disordered" evidence="4">
    <location>
        <begin position="1"/>
        <end position="22"/>
    </location>
</feature>
<feature type="compositionally biased region" description="Basic residues" evidence="4">
    <location>
        <begin position="7"/>
        <end position="19"/>
    </location>
</feature>
<feature type="modified residue" description="N-acetylserine" evidence="12">
    <location>
        <position position="2"/>
    </location>
</feature>
<feature type="modified residue" description="Phosphoserine; by RPS6KA5" evidence="12">
    <location>
        <position position="2"/>
    </location>
</feature>
<feature type="modified residue" description="Citrulline; alternate" evidence="2">
    <location>
        <position position="4"/>
    </location>
</feature>
<feature type="modified residue" description="Symmetric dimethylarginine; by PRMT5; alternate" evidence="14">
    <location>
        <position position="4"/>
    </location>
</feature>
<feature type="modified residue" description="N6-(2-hydroxyisobutyryl)lysine; alternate" evidence="10">
    <location>
        <position position="6"/>
    </location>
</feature>
<feature type="modified residue" description="N6-(beta-hydroxybutyryl)lysine; alternate" evidence="11">
    <location>
        <position position="6"/>
    </location>
</feature>
<feature type="modified residue" description="N6-acetyllysine; alternate" evidence="12">
    <location>
        <position position="6"/>
    </location>
</feature>
<feature type="modified residue" description="N6-(2-hydroxyisobutyryl)lysine; alternate" evidence="10">
    <location>
        <position position="10"/>
    </location>
</feature>
<feature type="modified residue" description="N6-lactoyllysine; alternate" evidence="1">
    <location>
        <position position="10"/>
    </location>
</feature>
<feature type="modified residue" description="N6-succinyllysine; alternate" evidence="3">
    <location>
        <position position="10"/>
    </location>
</feature>
<feature type="modified residue" description="N6-(2-hydroxyisobutyryl)lysine; alternate" evidence="10">
    <location>
        <position position="37"/>
    </location>
</feature>
<feature type="modified residue" description="N6-(beta-hydroxybutyryl)lysine; alternate" evidence="11">
    <location>
        <position position="37"/>
    </location>
</feature>
<feature type="modified residue" description="N6-crotonyllysine; alternate" evidence="8">
    <location>
        <position position="37"/>
    </location>
</feature>
<feature type="modified residue" description="N6-(2-hydroxyisobutyryl)lysine" evidence="10">
    <location>
        <position position="75"/>
    </location>
</feature>
<feature type="modified residue" description="N6-(2-hydroxyisobutyryl)lysine" evidence="10">
    <location>
        <position position="76"/>
    </location>
</feature>
<feature type="modified residue" description="N6-(2-hydroxyisobutyryl)lysine; alternate" evidence="10">
    <location>
        <position position="96"/>
    </location>
</feature>
<feature type="modified residue" description="N6-glutaryllysine; alternate" evidence="2">
    <location>
        <position position="96"/>
    </location>
</feature>
<feature type="modified residue" description="N6-succinyllysine; alternate" evidence="3">
    <location>
        <position position="96"/>
    </location>
</feature>
<feature type="modified residue" description="N6-glutaryllysine" evidence="2">
    <location>
        <position position="100"/>
    </location>
</feature>
<feature type="modified residue" description="N5-methylglutamine" evidence="9">
    <location>
        <position position="105"/>
    </location>
</feature>
<feature type="modified residue" description="N6-(2-hydroxyisobutyryl)lysine; alternate" evidence="10">
    <location>
        <position position="119"/>
    </location>
</feature>
<feature type="modified residue" description="N6-crotonyllysine; alternate" evidence="8">
    <location>
        <position position="119"/>
    </location>
</feature>
<feature type="modified residue" description="N6-glutaryllysine; alternate" evidence="2">
    <location>
        <position position="119"/>
    </location>
</feature>
<feature type="modified residue" description="N6-(beta-hydroxybutyryl)lysine; alternate" evidence="11">
    <location>
        <position position="120"/>
    </location>
</feature>
<feature type="modified residue" description="N6-crotonyllysine; alternate" evidence="2">
    <location>
        <position position="120"/>
    </location>
</feature>
<feature type="modified residue" description="N6-glutaryllysine; alternate" evidence="2">
    <location>
        <position position="120"/>
    </location>
</feature>
<feature type="modified residue" description="Phosphothreonine; by DCAF1" evidence="3">
    <location>
        <position position="121"/>
    </location>
</feature>
<feature type="modified residue" description="N6-(beta-hydroxybutyryl)lysine; alternate" evidence="11">
    <location>
        <position position="126"/>
    </location>
</feature>
<feature type="modified residue" description="N6-crotonyllysine; alternate" evidence="2">
    <location>
        <position position="126"/>
    </location>
</feature>
<feature type="modified residue" description="N6-glutaryllysine; alternate" evidence="2">
    <location>
        <position position="126"/>
    </location>
</feature>
<feature type="cross-link" description="Glycyl lysine isopeptide (Lys-Gly) (interchain with G-Cter in ubiquitin)" evidence="3">
    <location>
        <position position="14"/>
    </location>
</feature>
<feature type="cross-link" description="Glycyl lysine isopeptide (Lys-Gly) (interchain with G-Cter in ubiquitin)" evidence="3">
    <location>
        <position position="16"/>
    </location>
</feature>
<feature type="cross-link" description="Glycyl lysine isopeptide (Lys-Gly) (interchain with G-Cter in ubiquitin); alternate" evidence="5 6">
    <location>
        <position position="120"/>
    </location>
</feature>